<comment type="catalytic activity">
    <reaction evidence="4">
        <text>an acyl phosphate + H2O = a carboxylate + phosphate + H(+)</text>
        <dbReference type="Rhea" id="RHEA:14965"/>
        <dbReference type="ChEBI" id="CHEBI:15377"/>
        <dbReference type="ChEBI" id="CHEBI:15378"/>
        <dbReference type="ChEBI" id="CHEBI:29067"/>
        <dbReference type="ChEBI" id="CHEBI:43474"/>
        <dbReference type="ChEBI" id="CHEBI:59918"/>
        <dbReference type="EC" id="3.6.1.7"/>
    </reaction>
</comment>
<comment type="alternative products">
    <event type="alternative initiation"/>
    <isoform>
        <id>P24540-1</id>
        <name>ACYB</name>
        <sequence type="displayed"/>
    </isoform>
    <isoform>
        <id>P24540-2</id>
        <name>ACYA</name>
        <sequence type="described" ref="VSP_026024"/>
    </isoform>
    <text>It is uncertain whether isoform ACYA is produced by alternative initiation or another biological event.</text>
</comment>
<comment type="tissue specificity">
    <text>Organ-common type isozyme is found in many different tissues.</text>
</comment>
<comment type="similarity">
    <text evidence="3">Belongs to the acylphosphatase family.</text>
</comment>
<proteinExistence type="evidence at protein level"/>
<keyword id="KW-0007">Acetylation</keyword>
<keyword id="KW-0024">Alternative initiation</keyword>
<keyword id="KW-0903">Direct protein sequencing</keyword>
<keyword id="KW-0378">Hydrolase</keyword>
<keyword id="KW-1185">Reference proteome</keyword>
<evidence type="ECO:0000255" key="1">
    <source>
        <dbReference type="PROSITE-ProRule" id="PRU00520"/>
    </source>
</evidence>
<evidence type="ECO:0000269" key="2">
    <source>
    </source>
</evidence>
<evidence type="ECO:0000305" key="3"/>
<evidence type="ECO:0000305" key="4">
    <source>
    </source>
</evidence>
<organism>
    <name type="scientific">Sus scrofa</name>
    <name type="common">Pig</name>
    <dbReference type="NCBI Taxonomy" id="9823"/>
    <lineage>
        <taxon>Eukaryota</taxon>
        <taxon>Metazoa</taxon>
        <taxon>Chordata</taxon>
        <taxon>Craniata</taxon>
        <taxon>Vertebrata</taxon>
        <taxon>Euteleostomi</taxon>
        <taxon>Mammalia</taxon>
        <taxon>Eutheria</taxon>
        <taxon>Laurasiatheria</taxon>
        <taxon>Artiodactyla</taxon>
        <taxon>Suina</taxon>
        <taxon>Suidae</taxon>
        <taxon>Sus</taxon>
    </lineage>
</organism>
<protein>
    <recommendedName>
        <fullName>Acylphosphatase-1</fullName>
        <ecNumber evidence="4">3.6.1.7</ecNumber>
    </recommendedName>
    <alternativeName>
        <fullName>Acylphosphatase, organ-common type isozyme</fullName>
    </alternativeName>
    <alternativeName>
        <fullName>Acylphosphate phosphohydrolase 1</fullName>
    </alternativeName>
</protein>
<sequence>MSMAEGDTLISVDYEVFGKVQGVFFRKYTQAEGKKLGLVGWVQNTDQGTVQGQLQGPTSKVRHMQEWLETRGSPKSHIDRASFNNEKVISKLDYSDFQIVK</sequence>
<gene>
    <name type="primary">ACYP1</name>
    <name type="synonym">ACYPE</name>
</gene>
<accession>P24540</accession>
<name>ACYP1_PIG</name>
<dbReference type="EC" id="3.6.1.7" evidence="4"/>
<dbReference type="RefSeq" id="NP_001177128.1">
    <molecule id="P24540-1"/>
    <property type="nucleotide sequence ID" value="NM_001190199.1"/>
</dbReference>
<dbReference type="RefSeq" id="XP_005656433.1">
    <molecule id="P24540-1"/>
    <property type="nucleotide sequence ID" value="XM_005656376.3"/>
</dbReference>
<dbReference type="SMR" id="P24540"/>
<dbReference type="FunCoup" id="P24540">
    <property type="interactions" value="259"/>
</dbReference>
<dbReference type="STRING" id="9823.ENSSSCP00000002579"/>
<dbReference type="iPTMnet" id="P24540"/>
<dbReference type="PaxDb" id="9823-ENSSSCP00000002579"/>
<dbReference type="PeptideAtlas" id="P24540"/>
<dbReference type="Ensembl" id="ENSSSCT00090038689">
    <molecule id="P24540-1"/>
    <property type="protein sequence ID" value="ENSSSCP00090024068"/>
    <property type="gene ID" value="ENSSSCG00090021836"/>
</dbReference>
<dbReference type="GeneID" id="100155997"/>
<dbReference type="KEGG" id="ssc:100155997"/>
<dbReference type="CTD" id="97"/>
<dbReference type="eggNOG" id="KOG3360">
    <property type="taxonomic scope" value="Eukaryota"/>
</dbReference>
<dbReference type="HOGENOM" id="CLU_1781825_0_0_1"/>
<dbReference type="InParanoid" id="P24540"/>
<dbReference type="OrthoDB" id="429932at2759"/>
<dbReference type="SABIO-RK" id="P24540"/>
<dbReference type="Proteomes" id="UP000008227">
    <property type="component" value="Unplaced"/>
</dbReference>
<dbReference type="Proteomes" id="UP000314985">
    <property type="component" value="Unplaced"/>
</dbReference>
<dbReference type="Proteomes" id="UP000694570">
    <property type="component" value="Unplaced"/>
</dbReference>
<dbReference type="Proteomes" id="UP000694571">
    <property type="component" value="Unplaced"/>
</dbReference>
<dbReference type="Proteomes" id="UP000694720">
    <property type="component" value="Unplaced"/>
</dbReference>
<dbReference type="Proteomes" id="UP000694722">
    <property type="component" value="Unplaced"/>
</dbReference>
<dbReference type="Proteomes" id="UP000694723">
    <property type="component" value="Unplaced"/>
</dbReference>
<dbReference type="Proteomes" id="UP000694724">
    <property type="component" value="Unplaced"/>
</dbReference>
<dbReference type="Proteomes" id="UP000694725">
    <property type="component" value="Unplaced"/>
</dbReference>
<dbReference type="Proteomes" id="UP000694726">
    <property type="component" value="Unplaced"/>
</dbReference>
<dbReference type="Proteomes" id="UP000694727">
    <property type="component" value="Unplaced"/>
</dbReference>
<dbReference type="Proteomes" id="UP000694728">
    <property type="component" value="Unplaced"/>
</dbReference>
<dbReference type="GO" id="GO:0003998">
    <property type="term" value="F:acylphosphatase activity"/>
    <property type="evidence" value="ECO:0000318"/>
    <property type="project" value="GO_Central"/>
</dbReference>
<dbReference type="FunFam" id="3.30.70.100:FF:000011">
    <property type="entry name" value="Acylphosphatase"/>
    <property type="match status" value="1"/>
</dbReference>
<dbReference type="Gene3D" id="3.30.70.100">
    <property type="match status" value="1"/>
</dbReference>
<dbReference type="InterPro" id="IPR020456">
    <property type="entry name" value="Acylphosphatase"/>
</dbReference>
<dbReference type="InterPro" id="IPR001792">
    <property type="entry name" value="Acylphosphatase-like_dom"/>
</dbReference>
<dbReference type="InterPro" id="IPR036046">
    <property type="entry name" value="Acylphosphatase-like_dom_sf"/>
</dbReference>
<dbReference type="InterPro" id="IPR017968">
    <property type="entry name" value="Acylphosphatase_CS"/>
</dbReference>
<dbReference type="PANTHER" id="PTHR10029">
    <property type="entry name" value="ACYLPHOSPHATASE"/>
    <property type="match status" value="1"/>
</dbReference>
<dbReference type="PANTHER" id="PTHR10029:SF21">
    <property type="entry name" value="ACYLPHOSPHATASE-1"/>
    <property type="match status" value="1"/>
</dbReference>
<dbReference type="Pfam" id="PF00708">
    <property type="entry name" value="Acylphosphatase"/>
    <property type="match status" value="1"/>
</dbReference>
<dbReference type="PRINTS" id="PR00112">
    <property type="entry name" value="ACYLPHPHTASE"/>
</dbReference>
<dbReference type="SUPFAM" id="SSF54975">
    <property type="entry name" value="Acylphosphatase/BLUF domain-like"/>
    <property type="match status" value="1"/>
</dbReference>
<dbReference type="PROSITE" id="PS00150">
    <property type="entry name" value="ACYLPHOSPHATASE_1"/>
    <property type="match status" value="1"/>
</dbReference>
<dbReference type="PROSITE" id="PS00151">
    <property type="entry name" value="ACYLPHOSPHATASE_2"/>
    <property type="match status" value="1"/>
</dbReference>
<dbReference type="PROSITE" id="PS51160">
    <property type="entry name" value="ACYLPHOSPHATASE_3"/>
    <property type="match status" value="1"/>
</dbReference>
<feature type="initiator methionine" description="Removed" evidence="2">
    <location>
        <position position="1"/>
    </location>
</feature>
<feature type="chain" id="PRO_0000158537" description="Acylphosphatase-1">
    <location>
        <begin position="2"/>
        <end position="101"/>
    </location>
</feature>
<feature type="domain" description="Acylphosphatase-like" evidence="1">
    <location>
        <begin position="11"/>
        <end position="101"/>
    </location>
</feature>
<feature type="active site" evidence="1">
    <location>
        <position position="26"/>
    </location>
</feature>
<feature type="active site" evidence="1">
    <location>
        <position position="44"/>
    </location>
</feature>
<feature type="modified residue" description="N-acetylserine" evidence="2">
    <location>
        <position position="2"/>
    </location>
</feature>
<feature type="splice variant" id="VSP_026024" description="In isoform ACYA." evidence="3">
    <location>
        <begin position="1"/>
        <end position="2"/>
    </location>
</feature>
<feature type="initiator methionine" description="Removed" evidence="2">
    <location sequence="P24540-2">
        <position position="1"/>
    </location>
</feature>
<feature type="modified residue" description="N-acetylalanine" evidence="2">
    <location sequence="P24540-2">
        <position position="2"/>
    </location>
</feature>
<reference key="1">
    <citation type="journal article" date="1991" name="J. Biochem.">
        <title>The primary structure of two molecular species of porcine organ-common type acylphosphatase.</title>
        <authorList>
            <person name="Mizuno Y."/>
            <person name="Kanesaka Y."/>
            <person name="Fujita H."/>
            <person name="Minowa O."/>
            <person name="Shiokawa H."/>
        </authorList>
    </citation>
    <scope>PROTEIN SEQUENCE OF 2-101</scope>
    <scope>PROTEIN SEQUENCE OF 4-101 (ISOFORM ACYA)</scope>
    <scope>ACETYLATION AT SER-2</scope>
    <scope>ACETYLATION AT ALA-2 (ISOFORM ACYA)</scope>
    <scope>CATALYTIC ACTIVITY</scope>
    <source>
        <tissue>Brain</tissue>
        <tissue>Testis</tissue>
    </source>
</reference>